<sequence>MTIAKMIDHTALKPDTTKEQILTLTKEAREYGFASVCVNPTWVKLSAEQLAGAESVVCTVIGFPLGANTPEVKAFEVKDAIQNGAKEVDMVINIGALKDKDDELVERDIRAVVDAAKGKALVKVIIETCLLTDEEKVRACEIAVKAGTDFVKTSTGFSTGGATAEDIALMRKTVGPNIGVKASGGVRTKEDVEKMIEAGATRIGASAGVAIVSGEKPAKPDNY</sequence>
<gene>
    <name evidence="1" type="primary">deoC</name>
    <name type="ordered locus">Lm4b_02007</name>
</gene>
<comment type="function">
    <text evidence="1">Catalyzes a reversible aldol reaction between acetaldehyde and D-glyceraldehyde 3-phosphate to generate 2-deoxy-D-ribose 5-phosphate.</text>
</comment>
<comment type="catalytic activity">
    <reaction evidence="1">
        <text>2-deoxy-D-ribose 5-phosphate = D-glyceraldehyde 3-phosphate + acetaldehyde</text>
        <dbReference type="Rhea" id="RHEA:12821"/>
        <dbReference type="ChEBI" id="CHEBI:15343"/>
        <dbReference type="ChEBI" id="CHEBI:59776"/>
        <dbReference type="ChEBI" id="CHEBI:62877"/>
        <dbReference type="EC" id="4.1.2.4"/>
    </reaction>
</comment>
<comment type="pathway">
    <text evidence="1">Carbohydrate degradation; 2-deoxy-D-ribose 1-phosphate degradation; D-glyceraldehyde 3-phosphate and acetaldehyde from 2-deoxy-alpha-D-ribose 1-phosphate: step 2/2.</text>
</comment>
<comment type="subcellular location">
    <subcellularLocation>
        <location evidence="1">Cytoplasm</location>
    </subcellularLocation>
</comment>
<comment type="similarity">
    <text evidence="1">Belongs to the DeoC/FbaB aldolase family. DeoC type 1 subfamily.</text>
</comment>
<proteinExistence type="inferred from homology"/>
<accession>C1KWT9</accession>
<keyword id="KW-0963">Cytoplasm</keyword>
<keyword id="KW-0456">Lyase</keyword>
<keyword id="KW-0704">Schiff base</keyword>
<feature type="chain" id="PRO_1000202967" description="Deoxyribose-phosphate aldolase">
    <location>
        <begin position="1"/>
        <end position="223"/>
    </location>
</feature>
<feature type="active site" description="Proton donor/acceptor" evidence="1">
    <location>
        <position position="89"/>
    </location>
</feature>
<feature type="active site" description="Schiff-base intermediate with acetaldehyde" evidence="1">
    <location>
        <position position="152"/>
    </location>
</feature>
<feature type="active site" description="Proton donor/acceptor" evidence="1">
    <location>
        <position position="181"/>
    </location>
</feature>
<name>DEOC_LISMC</name>
<organism>
    <name type="scientific">Listeria monocytogenes serotype 4b (strain CLIP80459)</name>
    <dbReference type="NCBI Taxonomy" id="568819"/>
    <lineage>
        <taxon>Bacteria</taxon>
        <taxon>Bacillati</taxon>
        <taxon>Bacillota</taxon>
        <taxon>Bacilli</taxon>
        <taxon>Bacillales</taxon>
        <taxon>Listeriaceae</taxon>
        <taxon>Listeria</taxon>
    </lineage>
</organism>
<reference key="1">
    <citation type="journal article" date="2012" name="BMC Genomics">
        <title>Comparative genomics and transcriptomics of lineages I, II, and III strains of Listeria monocytogenes.</title>
        <authorList>
            <person name="Hain T."/>
            <person name="Ghai R."/>
            <person name="Billion A."/>
            <person name="Kuenne C.T."/>
            <person name="Steinweg C."/>
            <person name="Izar B."/>
            <person name="Mohamed W."/>
            <person name="Mraheil M."/>
            <person name="Domann E."/>
            <person name="Schaffrath S."/>
            <person name="Karst U."/>
            <person name="Goesmann A."/>
            <person name="Oehm S."/>
            <person name="Puhler A."/>
            <person name="Merkl R."/>
            <person name="Vorwerk S."/>
            <person name="Glaser P."/>
            <person name="Garrido P."/>
            <person name="Rusniok C."/>
            <person name="Buchrieser C."/>
            <person name="Goebel W."/>
            <person name="Chakraborty T."/>
        </authorList>
    </citation>
    <scope>NUCLEOTIDE SEQUENCE [LARGE SCALE GENOMIC DNA]</scope>
    <source>
        <strain>CLIP80459</strain>
    </source>
</reference>
<dbReference type="EC" id="4.1.2.4" evidence="1"/>
<dbReference type="EMBL" id="FM242711">
    <property type="protein sequence ID" value="CAS05764.1"/>
    <property type="molecule type" value="Genomic_DNA"/>
</dbReference>
<dbReference type="RefSeq" id="WP_003724140.1">
    <property type="nucleotide sequence ID" value="NC_012488.1"/>
</dbReference>
<dbReference type="SMR" id="C1KWT9"/>
<dbReference type="GeneID" id="93239903"/>
<dbReference type="KEGG" id="lmc:Lm4b_02007"/>
<dbReference type="HOGENOM" id="CLU_053595_0_1_9"/>
<dbReference type="UniPathway" id="UPA00002">
    <property type="reaction ID" value="UER00468"/>
</dbReference>
<dbReference type="GO" id="GO:0005737">
    <property type="term" value="C:cytoplasm"/>
    <property type="evidence" value="ECO:0007669"/>
    <property type="project" value="UniProtKB-SubCell"/>
</dbReference>
<dbReference type="GO" id="GO:0004139">
    <property type="term" value="F:deoxyribose-phosphate aldolase activity"/>
    <property type="evidence" value="ECO:0007669"/>
    <property type="project" value="UniProtKB-UniRule"/>
</dbReference>
<dbReference type="GO" id="GO:0006018">
    <property type="term" value="P:2-deoxyribose 1-phosphate catabolic process"/>
    <property type="evidence" value="ECO:0007669"/>
    <property type="project" value="UniProtKB-UniRule"/>
</dbReference>
<dbReference type="GO" id="GO:0016052">
    <property type="term" value="P:carbohydrate catabolic process"/>
    <property type="evidence" value="ECO:0007669"/>
    <property type="project" value="TreeGrafter"/>
</dbReference>
<dbReference type="GO" id="GO:0009264">
    <property type="term" value="P:deoxyribonucleotide catabolic process"/>
    <property type="evidence" value="ECO:0007669"/>
    <property type="project" value="InterPro"/>
</dbReference>
<dbReference type="CDD" id="cd00959">
    <property type="entry name" value="DeoC"/>
    <property type="match status" value="1"/>
</dbReference>
<dbReference type="FunFam" id="3.20.20.70:FF:000044">
    <property type="entry name" value="Deoxyribose-phosphate aldolase"/>
    <property type="match status" value="1"/>
</dbReference>
<dbReference type="Gene3D" id="3.20.20.70">
    <property type="entry name" value="Aldolase class I"/>
    <property type="match status" value="1"/>
</dbReference>
<dbReference type="HAMAP" id="MF_00114">
    <property type="entry name" value="DeoC_type1"/>
    <property type="match status" value="1"/>
</dbReference>
<dbReference type="InterPro" id="IPR013785">
    <property type="entry name" value="Aldolase_TIM"/>
</dbReference>
<dbReference type="InterPro" id="IPR011343">
    <property type="entry name" value="DeoC"/>
</dbReference>
<dbReference type="InterPro" id="IPR002915">
    <property type="entry name" value="DeoC/FbaB/LacD_aldolase"/>
</dbReference>
<dbReference type="InterPro" id="IPR028581">
    <property type="entry name" value="DeoC_typeI"/>
</dbReference>
<dbReference type="NCBIfam" id="TIGR00126">
    <property type="entry name" value="deoC"/>
    <property type="match status" value="1"/>
</dbReference>
<dbReference type="PANTHER" id="PTHR10889">
    <property type="entry name" value="DEOXYRIBOSE-PHOSPHATE ALDOLASE"/>
    <property type="match status" value="1"/>
</dbReference>
<dbReference type="PANTHER" id="PTHR10889:SF1">
    <property type="entry name" value="DEOXYRIBOSE-PHOSPHATE ALDOLASE"/>
    <property type="match status" value="1"/>
</dbReference>
<dbReference type="Pfam" id="PF01791">
    <property type="entry name" value="DeoC"/>
    <property type="match status" value="1"/>
</dbReference>
<dbReference type="PIRSF" id="PIRSF001357">
    <property type="entry name" value="DeoC"/>
    <property type="match status" value="1"/>
</dbReference>
<dbReference type="SMART" id="SM01133">
    <property type="entry name" value="DeoC"/>
    <property type="match status" value="1"/>
</dbReference>
<dbReference type="SUPFAM" id="SSF51569">
    <property type="entry name" value="Aldolase"/>
    <property type="match status" value="1"/>
</dbReference>
<protein>
    <recommendedName>
        <fullName evidence="1">Deoxyribose-phosphate aldolase</fullName>
        <shortName evidence="1">DERA</shortName>
        <ecNumber evidence="1">4.1.2.4</ecNumber>
    </recommendedName>
    <alternativeName>
        <fullName evidence="1">2-deoxy-D-ribose 5-phosphate aldolase</fullName>
    </alternativeName>
    <alternativeName>
        <fullName evidence="1">Phosphodeoxyriboaldolase</fullName>
        <shortName evidence="1">Deoxyriboaldolase</shortName>
    </alternativeName>
</protein>
<evidence type="ECO:0000255" key="1">
    <source>
        <dbReference type="HAMAP-Rule" id="MF_00114"/>
    </source>
</evidence>